<name>RLMC_HAEIG</name>
<protein>
    <recommendedName>
        <fullName evidence="1">23S rRNA (uracil(747)-C(5))-methyltransferase RlmC</fullName>
        <ecNumber evidence="1">2.1.1.189</ecNumber>
    </recommendedName>
    <alternativeName>
        <fullName evidence="1">23S rRNA(m5U747)-methyltransferase</fullName>
    </alternativeName>
</protein>
<keyword id="KW-0004">4Fe-4S</keyword>
<keyword id="KW-0408">Iron</keyword>
<keyword id="KW-0411">Iron-sulfur</keyword>
<keyword id="KW-0479">Metal-binding</keyword>
<keyword id="KW-0489">Methyltransferase</keyword>
<keyword id="KW-0698">rRNA processing</keyword>
<keyword id="KW-0949">S-adenosyl-L-methionine</keyword>
<keyword id="KW-0808">Transferase</keyword>
<reference key="1">
    <citation type="journal article" date="2007" name="Genome Biol.">
        <title>Characterization and modeling of the Haemophilus influenzae core and supragenomes based on the complete genomic sequences of Rd and 12 clinical nontypeable strains.</title>
        <authorList>
            <person name="Hogg J.S."/>
            <person name="Hu F.Z."/>
            <person name="Janto B."/>
            <person name="Boissy R."/>
            <person name="Hayes J."/>
            <person name="Keefe R."/>
            <person name="Post J.C."/>
            <person name="Ehrlich G.D."/>
        </authorList>
    </citation>
    <scope>NUCLEOTIDE SEQUENCE [LARGE SCALE GENOMIC DNA]</scope>
    <source>
        <strain>PittGG</strain>
    </source>
</reference>
<dbReference type="EC" id="2.1.1.189" evidence="1"/>
<dbReference type="EMBL" id="CP000672">
    <property type="protein sequence ID" value="ABR00505.1"/>
    <property type="molecule type" value="Genomic_DNA"/>
</dbReference>
<dbReference type="SMR" id="A5UI99"/>
<dbReference type="KEGG" id="hiq:CGSHiGG_08365"/>
<dbReference type="HOGENOM" id="CLU_014689_0_0_6"/>
<dbReference type="Proteomes" id="UP000001990">
    <property type="component" value="Chromosome"/>
</dbReference>
<dbReference type="GO" id="GO:0051539">
    <property type="term" value="F:4 iron, 4 sulfur cluster binding"/>
    <property type="evidence" value="ECO:0007669"/>
    <property type="project" value="UniProtKB-KW"/>
</dbReference>
<dbReference type="GO" id="GO:0005506">
    <property type="term" value="F:iron ion binding"/>
    <property type="evidence" value="ECO:0007669"/>
    <property type="project" value="UniProtKB-UniRule"/>
</dbReference>
<dbReference type="GO" id="GO:0070041">
    <property type="term" value="F:rRNA (uridine-C5-)-methyltransferase activity"/>
    <property type="evidence" value="ECO:0007669"/>
    <property type="project" value="UniProtKB-UniRule"/>
</dbReference>
<dbReference type="GO" id="GO:0070475">
    <property type="term" value="P:rRNA base methylation"/>
    <property type="evidence" value="ECO:0007669"/>
    <property type="project" value="TreeGrafter"/>
</dbReference>
<dbReference type="CDD" id="cd02440">
    <property type="entry name" value="AdoMet_MTases"/>
    <property type="match status" value="1"/>
</dbReference>
<dbReference type="FunFam" id="2.40.50.1070:FF:000002">
    <property type="entry name" value="23S rRNA (uracil(747)-C(5))-methyltransferase RlmC"/>
    <property type="match status" value="1"/>
</dbReference>
<dbReference type="Gene3D" id="2.40.50.1070">
    <property type="match status" value="1"/>
</dbReference>
<dbReference type="Gene3D" id="3.40.50.150">
    <property type="entry name" value="Vaccinia Virus protein VP39"/>
    <property type="match status" value="1"/>
</dbReference>
<dbReference type="HAMAP" id="MF_01012">
    <property type="entry name" value="23SrRNA_methyltr_RlmC"/>
    <property type="match status" value="1"/>
</dbReference>
<dbReference type="InterPro" id="IPR011825">
    <property type="entry name" value="23SrRNA_MeTrfase_RlmC"/>
</dbReference>
<dbReference type="InterPro" id="IPR030390">
    <property type="entry name" value="MeTrfase_TrmA_AS"/>
</dbReference>
<dbReference type="InterPro" id="IPR030391">
    <property type="entry name" value="MeTrfase_TrmA_CS"/>
</dbReference>
<dbReference type="InterPro" id="IPR029063">
    <property type="entry name" value="SAM-dependent_MTases_sf"/>
</dbReference>
<dbReference type="InterPro" id="IPR010280">
    <property type="entry name" value="U5_MeTrfase_fam"/>
</dbReference>
<dbReference type="NCBIfam" id="TIGR02085">
    <property type="entry name" value="meth_trns_rumB"/>
    <property type="match status" value="1"/>
</dbReference>
<dbReference type="PANTHER" id="PTHR11061">
    <property type="entry name" value="RNA M5U METHYLTRANSFERASE"/>
    <property type="match status" value="1"/>
</dbReference>
<dbReference type="PANTHER" id="PTHR11061:SF30">
    <property type="entry name" value="TRNA (URACIL(54)-C(5))-METHYLTRANSFERASE"/>
    <property type="match status" value="1"/>
</dbReference>
<dbReference type="Pfam" id="PF05958">
    <property type="entry name" value="tRNA_U5-meth_tr"/>
    <property type="match status" value="1"/>
</dbReference>
<dbReference type="SUPFAM" id="SSF53335">
    <property type="entry name" value="S-adenosyl-L-methionine-dependent methyltransferases"/>
    <property type="match status" value="1"/>
</dbReference>
<dbReference type="PROSITE" id="PS51687">
    <property type="entry name" value="SAM_MT_RNA_M5U"/>
    <property type="match status" value="1"/>
</dbReference>
<dbReference type="PROSITE" id="PS01230">
    <property type="entry name" value="TRMA_1"/>
    <property type="match status" value="1"/>
</dbReference>
<dbReference type="PROSITE" id="PS01231">
    <property type="entry name" value="TRMA_2"/>
    <property type="match status" value="1"/>
</dbReference>
<proteinExistence type="inferred from homology"/>
<feature type="chain" id="PRO_1000063003" description="23S rRNA (uracil(747)-C(5))-methyltransferase RlmC">
    <location>
        <begin position="1"/>
        <end position="392"/>
    </location>
</feature>
<feature type="active site" description="Nucleophile" evidence="1">
    <location>
        <position position="348"/>
    </location>
</feature>
<feature type="binding site" evidence="1">
    <location>
        <position position="4"/>
    </location>
    <ligand>
        <name>[4Fe-4S] cluster</name>
        <dbReference type="ChEBI" id="CHEBI:49883"/>
    </ligand>
</feature>
<feature type="binding site" evidence="1">
    <location>
        <position position="12"/>
    </location>
    <ligand>
        <name>[4Fe-4S] cluster</name>
        <dbReference type="ChEBI" id="CHEBI:49883"/>
    </ligand>
</feature>
<feature type="binding site" evidence="1">
    <location>
        <position position="15"/>
    </location>
    <ligand>
        <name>[4Fe-4S] cluster</name>
        <dbReference type="ChEBI" id="CHEBI:49883"/>
    </ligand>
</feature>
<feature type="binding site" evidence="1">
    <location>
        <position position="93"/>
    </location>
    <ligand>
        <name>[4Fe-4S] cluster</name>
        <dbReference type="ChEBI" id="CHEBI:49883"/>
    </ligand>
</feature>
<feature type="binding site" evidence="1">
    <location>
        <position position="218"/>
    </location>
    <ligand>
        <name>S-adenosyl-L-methionine</name>
        <dbReference type="ChEBI" id="CHEBI:59789"/>
    </ligand>
</feature>
<feature type="binding site" evidence="1">
    <location>
        <position position="247"/>
    </location>
    <ligand>
        <name>S-adenosyl-L-methionine</name>
        <dbReference type="ChEBI" id="CHEBI:59789"/>
    </ligand>
</feature>
<feature type="binding site" evidence="1">
    <location>
        <position position="275"/>
    </location>
    <ligand>
        <name>S-adenosyl-L-methionine</name>
        <dbReference type="ChEBI" id="CHEBI:59789"/>
    </ligand>
</feature>
<feature type="binding site" evidence="1">
    <location>
        <position position="321"/>
    </location>
    <ligand>
        <name>S-adenosyl-L-methionine</name>
        <dbReference type="ChEBI" id="CHEBI:59789"/>
    </ligand>
</feature>
<comment type="function">
    <text evidence="1">Catalyzes the formation of 5-methyl-uridine at position 747 (m5U747) in 23S rRNA.</text>
</comment>
<comment type="catalytic activity">
    <reaction evidence="1">
        <text>uridine(747) in 23S rRNA + S-adenosyl-L-methionine = 5-methyluridine(747) in 23S rRNA + S-adenosyl-L-homocysteine + H(+)</text>
        <dbReference type="Rhea" id="RHEA:42628"/>
        <dbReference type="Rhea" id="RHEA-COMP:10154"/>
        <dbReference type="Rhea" id="RHEA-COMP:10155"/>
        <dbReference type="ChEBI" id="CHEBI:15378"/>
        <dbReference type="ChEBI" id="CHEBI:57856"/>
        <dbReference type="ChEBI" id="CHEBI:59789"/>
        <dbReference type="ChEBI" id="CHEBI:65315"/>
        <dbReference type="ChEBI" id="CHEBI:74447"/>
        <dbReference type="EC" id="2.1.1.189"/>
    </reaction>
</comment>
<comment type="similarity">
    <text evidence="1">Belongs to the class I-like SAM-binding methyltransferase superfamily. RNA M5U methyltransferase family. RlmC subfamily.</text>
</comment>
<accession>A5UI99</accession>
<sequence length="392" mass="44724">MIDCRYYQQNECRSCQWLEIPYSQQLTEKQYHLKQQLISINCDEAQWLAPFQSNEQGFRNKAKMVVSGSVERPILGILKNPNDPQNAIDLCDCPLYPTHFSAIFSILKDFIGRAGLVPYNIAKQKGELKYILLTESIATEKLMLRFVLRTENKLPLIRRELPKLLEKLPHLEVISINLQPQHAAILEGEQEIFLTEQQFLPENFNGIPLFIRPQGFFQTNPKVAAGLYASAQQWVAEFPIYNLWDLFCGVGGFGLHCAKALQEKWGKPIKLTGIEISSSAILAASHSAKILGLEHVNFQSLDAASVIENKNENKPDLVIVNPPRRGIGKELSEFLNQIQPHFILYSSCNAMTMGKDLQHLTCYKPLKIQLFDMFPQTSHYEVLVLLERKKIN</sequence>
<gene>
    <name evidence="1" type="primary">rlmC</name>
    <name type="synonym">rumB</name>
    <name type="ordered locus">CGSHiGG_08365</name>
</gene>
<evidence type="ECO:0000255" key="1">
    <source>
        <dbReference type="HAMAP-Rule" id="MF_01012"/>
    </source>
</evidence>
<organism>
    <name type="scientific">Haemophilus influenzae (strain PittGG)</name>
    <dbReference type="NCBI Taxonomy" id="374931"/>
    <lineage>
        <taxon>Bacteria</taxon>
        <taxon>Pseudomonadati</taxon>
        <taxon>Pseudomonadota</taxon>
        <taxon>Gammaproteobacteria</taxon>
        <taxon>Pasteurellales</taxon>
        <taxon>Pasteurellaceae</taxon>
        <taxon>Haemophilus</taxon>
    </lineage>
</organism>